<dbReference type="EC" id="3.1.1.4" evidence="3 5"/>
<dbReference type="SMR" id="C0HKB8"/>
<dbReference type="GO" id="GO:0005576">
    <property type="term" value="C:extracellular region"/>
    <property type="evidence" value="ECO:0000314"/>
    <property type="project" value="UniProtKB"/>
</dbReference>
<dbReference type="GO" id="GO:0005509">
    <property type="term" value="F:calcium ion binding"/>
    <property type="evidence" value="ECO:0007669"/>
    <property type="project" value="InterPro"/>
</dbReference>
<dbReference type="GO" id="GO:0047498">
    <property type="term" value="F:calcium-dependent phospholipase A2 activity"/>
    <property type="evidence" value="ECO:0007669"/>
    <property type="project" value="TreeGrafter"/>
</dbReference>
<dbReference type="GO" id="GO:0004623">
    <property type="term" value="F:phospholipase A2 activity"/>
    <property type="evidence" value="ECO:0000314"/>
    <property type="project" value="UniProtKB"/>
</dbReference>
<dbReference type="GO" id="GO:0005543">
    <property type="term" value="F:phospholipid binding"/>
    <property type="evidence" value="ECO:0007669"/>
    <property type="project" value="TreeGrafter"/>
</dbReference>
<dbReference type="GO" id="GO:0050482">
    <property type="term" value="P:arachidonate secretion"/>
    <property type="evidence" value="ECO:0007669"/>
    <property type="project" value="InterPro"/>
</dbReference>
<dbReference type="GO" id="GO:0034638">
    <property type="term" value="P:phosphatidylcholine catabolic process"/>
    <property type="evidence" value="ECO:0000314"/>
    <property type="project" value="UniProtKB"/>
</dbReference>
<dbReference type="CDD" id="cd00125">
    <property type="entry name" value="PLA2c"/>
    <property type="match status" value="1"/>
</dbReference>
<dbReference type="FunFam" id="1.20.90.10:FF:000007">
    <property type="entry name" value="Acidic phospholipase A2"/>
    <property type="match status" value="1"/>
</dbReference>
<dbReference type="Gene3D" id="1.20.90.10">
    <property type="entry name" value="Phospholipase A2 domain"/>
    <property type="match status" value="1"/>
</dbReference>
<dbReference type="InterPro" id="IPR001211">
    <property type="entry name" value="PLipase_A2"/>
</dbReference>
<dbReference type="InterPro" id="IPR033112">
    <property type="entry name" value="PLipase_A2_Asp_AS"/>
</dbReference>
<dbReference type="InterPro" id="IPR016090">
    <property type="entry name" value="PLipase_A2_dom"/>
</dbReference>
<dbReference type="InterPro" id="IPR036444">
    <property type="entry name" value="PLipase_A2_dom_sf"/>
</dbReference>
<dbReference type="InterPro" id="IPR033113">
    <property type="entry name" value="PLipase_A2_His_AS"/>
</dbReference>
<dbReference type="PANTHER" id="PTHR11716:SF106">
    <property type="entry name" value="PHOSPHOLIPASE A2 A2-ACTITOXIN-UCS2A-LIKE"/>
    <property type="match status" value="1"/>
</dbReference>
<dbReference type="PANTHER" id="PTHR11716">
    <property type="entry name" value="PHOSPHOLIPASE A2 FAMILY MEMBER"/>
    <property type="match status" value="1"/>
</dbReference>
<dbReference type="Pfam" id="PF00068">
    <property type="entry name" value="Phospholip_A2_1"/>
    <property type="match status" value="1"/>
</dbReference>
<dbReference type="PRINTS" id="PR00389">
    <property type="entry name" value="PHPHLIPASEA2"/>
</dbReference>
<dbReference type="SMART" id="SM00085">
    <property type="entry name" value="PA2c"/>
    <property type="match status" value="1"/>
</dbReference>
<dbReference type="SUPFAM" id="SSF48619">
    <property type="entry name" value="Phospholipase A2, PLA2"/>
    <property type="match status" value="1"/>
</dbReference>
<dbReference type="PROSITE" id="PS00119">
    <property type="entry name" value="PA2_ASP"/>
    <property type="match status" value="1"/>
</dbReference>
<dbReference type="PROSITE" id="PS00118">
    <property type="entry name" value="PA2_HIS"/>
    <property type="match status" value="1"/>
</dbReference>
<comment type="function">
    <text evidence="5">Snake venom phospholipase A2 (PLA2) that shows strong myotoxicity and induces edema in mice. Shows no cytotoxicity in vitro. Has a strong anticoagulant effect in vitro. PLA2 catalyzes the calcium-dependent hydrolysis of the 2-acyl groups in 3-sn-phosphoglycerides.</text>
</comment>
<comment type="catalytic activity">
    <reaction evidence="3 5">
        <text>a 1,2-diacyl-sn-glycero-3-phosphocholine + H2O = a 1-acyl-sn-glycero-3-phosphocholine + a fatty acid + H(+)</text>
        <dbReference type="Rhea" id="RHEA:15801"/>
        <dbReference type="ChEBI" id="CHEBI:15377"/>
        <dbReference type="ChEBI" id="CHEBI:15378"/>
        <dbReference type="ChEBI" id="CHEBI:28868"/>
        <dbReference type="ChEBI" id="CHEBI:57643"/>
        <dbReference type="ChEBI" id="CHEBI:58168"/>
        <dbReference type="EC" id="3.1.1.4"/>
    </reaction>
</comment>
<comment type="cofactor">
    <cofactor evidence="1">
        <name>Ca(2+)</name>
        <dbReference type="ChEBI" id="CHEBI:29108"/>
    </cofactor>
    <text evidence="1">Binds 1 Ca(2+) ion per subunit.</text>
</comment>
<comment type="subcellular location">
    <subcellularLocation>
        <location evidence="5">Secreted</location>
    </subcellularLocation>
</comment>
<comment type="tissue specificity">
    <text evidence="8">Expressed by the venom gland.</text>
</comment>
<comment type="mass spectrometry" mass="13288.0" error="2.0" method="Electrospray" evidence="5"/>
<comment type="similarity">
    <text evidence="7">Belongs to the phospholipase A2 family. Group I subfamily. D49 sub-subfamily.</text>
</comment>
<name>PA2A1_MICDM</name>
<sequence length="117" mass="13188">NLIDFKNMIKCTTKRSVLDFADYGCYCGSGGSGTPVDDLDRCCKVHDDCYGEAEKVHGCWPKWTLYSYDCSNGQLTCKDNNTKCKDFVCNCDRTAAICFAKAPYDDNNFMINNPRCQ</sequence>
<organism evidence="6">
    <name type="scientific">Micrurus dumerilii</name>
    <name type="common">Coral snake</name>
    <dbReference type="NCBI Taxonomy" id="1337871"/>
    <lineage>
        <taxon>Eukaryota</taxon>
        <taxon>Metazoa</taxon>
        <taxon>Chordata</taxon>
        <taxon>Craniata</taxon>
        <taxon>Vertebrata</taxon>
        <taxon>Euteleostomi</taxon>
        <taxon>Lepidosauria</taxon>
        <taxon>Squamata</taxon>
        <taxon>Bifurcata</taxon>
        <taxon>Unidentata</taxon>
        <taxon>Episquamata</taxon>
        <taxon>Toxicofera</taxon>
        <taxon>Serpentes</taxon>
        <taxon>Colubroidea</taxon>
        <taxon>Elapidae</taxon>
        <taxon>Elapinae</taxon>
        <taxon>Micrurus</taxon>
    </lineage>
</organism>
<proteinExistence type="evidence at protein level"/>
<reference evidence="7" key="1">
    <citation type="journal article" date="2017" name="Biochimie">
        <title>Primary structures and partial toxicological characterization of two phospholipases A2 from Micrurus mipartitus and Micrurus dumerilii coral snake venoms.</title>
        <authorList>
            <person name="Rey-Suarez P."/>
            <person name="Nunez V."/>
            <person name="Saldarriaga-Cordoba M."/>
            <person name="Lomonte B."/>
        </authorList>
    </citation>
    <scope>PROTEIN SEQUENCE</scope>
    <scope>FUNCTION</scope>
    <scope>CATALYTIC ACTIVITY</scope>
    <scope>SUBCELLULAR LOCATION</scope>
    <scope>MASS SPECTROMETRY</scope>
    <scope>IDENTIFICATION BY MASS SPECTROMETRY</scope>
    <source>
        <tissue evidence="6">Venom</tissue>
    </source>
</reference>
<keyword id="KW-0106">Calcium</keyword>
<keyword id="KW-0903">Direct protein sequencing</keyword>
<keyword id="KW-1015">Disulfide bond</keyword>
<keyword id="KW-0325">Glycoprotein</keyword>
<keyword id="KW-0378">Hydrolase</keyword>
<keyword id="KW-0442">Lipid degradation</keyword>
<keyword id="KW-0443">Lipid metabolism</keyword>
<keyword id="KW-0479">Metal-binding</keyword>
<keyword id="KW-0964">Secreted</keyword>
<feature type="chain" id="PRO_0000441096" description="Acidic phospholipase A2" evidence="5">
    <location>
        <begin position="1"/>
        <end position="117"/>
    </location>
</feature>
<feature type="active site" evidence="3">
    <location>
        <position position="46"/>
    </location>
</feature>
<feature type="active site" evidence="4">
    <location>
        <position position="92"/>
    </location>
</feature>
<feature type="binding site" evidence="1">
    <location>
        <position position="26"/>
    </location>
    <ligand>
        <name>Ca(2+)</name>
        <dbReference type="ChEBI" id="CHEBI:29108"/>
    </ligand>
</feature>
<feature type="binding site" evidence="1">
    <location>
        <position position="28"/>
    </location>
    <ligand>
        <name>Ca(2+)</name>
        <dbReference type="ChEBI" id="CHEBI:29108"/>
    </ligand>
</feature>
<feature type="binding site" evidence="1">
    <location>
        <position position="30"/>
    </location>
    <ligand>
        <name>Ca(2+)</name>
        <dbReference type="ChEBI" id="CHEBI:29108"/>
    </ligand>
</feature>
<feature type="binding site" evidence="1">
    <location>
        <position position="47"/>
    </location>
    <ligand>
        <name>Ca(2+)</name>
        <dbReference type="ChEBI" id="CHEBI:29108"/>
    </ligand>
</feature>
<feature type="glycosylation site" description="N-linked (GlcNAc...) asparagine" evidence="2">
    <location>
        <position position="80"/>
    </location>
</feature>
<feature type="disulfide bond" evidence="1">
    <location>
        <begin position="11"/>
        <end position="70"/>
    </location>
</feature>
<feature type="disulfide bond" evidence="1">
    <location>
        <begin position="25"/>
        <end position="116"/>
    </location>
</feature>
<feature type="disulfide bond" evidence="1">
    <location>
        <begin position="27"/>
        <end position="43"/>
    </location>
</feature>
<feature type="disulfide bond" evidence="1">
    <location>
        <begin position="42"/>
        <end position="98"/>
    </location>
</feature>
<feature type="disulfide bond" evidence="1">
    <location>
        <begin position="49"/>
        <end position="91"/>
    </location>
</feature>
<feature type="disulfide bond" evidence="1">
    <location>
        <begin position="59"/>
        <end position="84"/>
    </location>
</feature>
<feature type="disulfide bond" evidence="1">
    <location>
        <begin position="77"/>
        <end position="89"/>
    </location>
</feature>
<accession>C0HKB8</accession>
<protein>
    <recommendedName>
        <fullName evidence="6">Acidic phospholipase A2</fullName>
        <shortName evidence="6">MdumPLA2</shortName>
        <shortName evidence="1">svPLA2</shortName>
        <ecNumber evidence="3 5">3.1.1.4</ecNumber>
    </recommendedName>
    <alternativeName>
        <fullName evidence="1">Phosphatidylcholine 2-acylhydrolase</fullName>
    </alternativeName>
</protein>
<evidence type="ECO:0000250" key="1">
    <source>
        <dbReference type="UniProtKB" id="P15445"/>
    </source>
</evidence>
<evidence type="ECO:0000255" key="2">
    <source>
        <dbReference type="PROSITE-ProRule" id="PRU00498"/>
    </source>
</evidence>
<evidence type="ECO:0000255" key="3">
    <source>
        <dbReference type="PROSITE-ProRule" id="PRU10035"/>
    </source>
</evidence>
<evidence type="ECO:0000255" key="4">
    <source>
        <dbReference type="PROSITE-ProRule" id="PRU10036"/>
    </source>
</evidence>
<evidence type="ECO:0000269" key="5">
    <source>
    </source>
</evidence>
<evidence type="ECO:0000303" key="6">
    <source>
    </source>
</evidence>
<evidence type="ECO:0000305" key="7"/>
<evidence type="ECO:0000305" key="8">
    <source>
    </source>
</evidence>